<organism>
    <name type="scientific">Escherichia coli (strain K12)</name>
    <dbReference type="NCBI Taxonomy" id="83333"/>
    <lineage>
        <taxon>Bacteria</taxon>
        <taxon>Pseudomonadati</taxon>
        <taxon>Pseudomonadota</taxon>
        <taxon>Gammaproteobacteria</taxon>
        <taxon>Enterobacterales</taxon>
        <taxon>Enterobacteriaceae</taxon>
        <taxon>Escherichia</taxon>
    </lineage>
</organism>
<keyword id="KW-0002">3D-structure</keyword>
<keyword id="KW-0997">Cell inner membrane</keyword>
<keyword id="KW-1003">Cell membrane</keyword>
<keyword id="KW-0472">Membrane</keyword>
<keyword id="KW-0534">Nitrate assimilation</keyword>
<keyword id="KW-1185">Reference proteome</keyword>
<keyword id="KW-0812">Transmembrane</keyword>
<keyword id="KW-1133">Transmembrane helix</keyword>
<keyword id="KW-0813">Transport</keyword>
<protein>
    <recommendedName>
        <fullName evidence="9">Nitrate/nitrite antiporter NarK</fullName>
    </recommendedName>
    <alternativeName>
        <fullName evidence="8">Nitrate/nitrite exchanger</fullName>
    </alternativeName>
    <alternativeName>
        <fullName>Nitrite extrusion protein 1</fullName>
    </alternativeName>
    <alternativeName>
        <fullName>Nitrite facilitator 1</fullName>
    </alternativeName>
</protein>
<proteinExistence type="evidence at protein level"/>
<sequence>MSHSSAPERATGAVITDWRPEDPAFWQQRGQRIASRNLWISVPCLLLAFCVWMLFSAVAVNLPKVGFNFTTDQLFMLTALPSVSGALLRVPYSFMVPIFGGRRWTAFSTGILIIPCVWLGFAVQDTSTPYSVFIIISLLCGFAGANFASSMANISFFFPKQKQGGALGLNGGLGNMGVSVMQLVAPLVVSLSIFAVFGSQGVKQPDGTELYLANASWIWVPFLAIFTIAAWFGMNDLATSKASIKEQLPVLKRGHLWIMSLLYLATFGSFIGFSAGFAMLSKTQFPDVQILQYAFFGPFIGALARSAGGALSDRLGGTRVTLVNFILMAIFSGLLFLTLPTDGQGGSFMAFFAVFLALFLTAGLGSGSTFQMISVIFRKLTMDRVKAEGGSDERAMREAATDTAAALGFISAIGAIGGFFIPKAFGSSLALTGSPVGAMKVFLIFYIACVVITWAVYGRHSKK</sequence>
<gene>
    <name evidence="10" type="primary">narK</name>
    <name type="ordered locus">b1223</name>
    <name type="ordered locus">JW1214</name>
</gene>
<comment type="function">
    <text evidence="1 2 4 5 6 7">Catalyzes nitrate uptake, nitrite uptake and nitrite export across the cytoplasmic membrane (PubMed:11967075, PubMed:15667293, PubMed:16804183, PubMed:23665960, PubMed:25959928, PubMed:2668029). Functions as a nitrate/nitrite exchanger, and protons are unlikely to be co-transported (PubMed:15667293, PubMed:23665960, PubMed:25959928, PubMed:2668029).</text>
</comment>
<comment type="catalytic activity">
    <reaction evidence="2 5 6 14">
        <text>nitrate(in) + nitrite(out) = nitrate(out) + nitrite(in)</text>
        <dbReference type="Rhea" id="RHEA:28743"/>
        <dbReference type="ChEBI" id="CHEBI:16301"/>
        <dbReference type="ChEBI" id="CHEBI:17632"/>
    </reaction>
</comment>
<comment type="subcellular location">
    <subcellularLocation>
        <location evidence="3 5 6">Cell inner membrane</location>
        <topology evidence="5 6">Multi-pass membrane protein</topology>
    </subcellularLocation>
</comment>
<comment type="induction">
    <text evidence="4 7">Highly expressed during anaerobic growth in the presence of nitrate.</text>
</comment>
<comment type="domain">
    <text evidence="5 6">Each molecule contains 12 transmembrane helices, forming the N bundle (TM1-6) and the C bundle (TM7-12) (PubMed:25959928). These N and C bundles are connected with a linker loop between TM6 and TM7 (PubMed:25959928). The substrate-binding pocket is located at the interface between the N and C bundles (PubMed:23665960, PubMed:25959928). Substrate recognition is coupled to the transport cycle by the concomitant movement of the transmembrane helices and the key tyrosine and arginine residues in the substrate-binding site (PubMed:25959928).</text>
</comment>
<comment type="disruption phenotype">
    <text evidence="1 7">Deletion mutant, under conditions for the induction of nitrate respiration, is unable to perform nitrate transport (PubMed:2668029). The narK-narU double mutant is defective in nitrate-dependent growth unless nitrate transport is facilitated by the nitrate ionophore, reduced benzyl viologen (BV) (PubMed:11967075). Deletion of both NarK and NirC also decreases nitrite uptake (PubMed:11967075).</text>
</comment>
<comment type="similarity">
    <text evidence="11">Belongs to the major facilitator superfamily. Nitrate/nitrite porter (TC 2.A.1.8) family.</text>
</comment>
<accession>P10903</accession>
<name>NARK_ECOLI</name>
<dbReference type="EMBL" id="X15996">
    <property type="protein sequence ID" value="CAA34126.1"/>
    <property type="molecule type" value="Genomic_DNA"/>
</dbReference>
<dbReference type="EMBL" id="X69189">
    <property type="protein sequence ID" value="CAA48933.1"/>
    <property type="molecule type" value="Genomic_DNA"/>
</dbReference>
<dbReference type="EMBL" id="U00096">
    <property type="protein sequence ID" value="AAC74307.1"/>
    <property type="molecule type" value="Genomic_DNA"/>
</dbReference>
<dbReference type="EMBL" id="AP009048">
    <property type="protein sequence ID" value="BAA36091.1"/>
    <property type="molecule type" value="Genomic_DNA"/>
</dbReference>
<dbReference type="EMBL" id="X13360">
    <property type="protein sequence ID" value="CAA31740.1"/>
    <property type="molecule type" value="Genomic_DNA"/>
</dbReference>
<dbReference type="PIR" id="S05239">
    <property type="entry name" value="GRECNK"/>
</dbReference>
<dbReference type="RefSeq" id="NP_415741.1">
    <property type="nucleotide sequence ID" value="NC_000913.3"/>
</dbReference>
<dbReference type="RefSeq" id="WP_000019827.1">
    <property type="nucleotide sequence ID" value="NZ_STEB01000023.1"/>
</dbReference>
<dbReference type="PDB" id="4JR9">
    <property type="method" value="X-ray"/>
    <property type="resolution" value="2.60 A"/>
    <property type="chains" value="A=1-463"/>
</dbReference>
<dbReference type="PDB" id="4JRE">
    <property type="method" value="X-ray"/>
    <property type="resolution" value="2.80 A"/>
    <property type="chains" value="A/D=1-463"/>
</dbReference>
<dbReference type="PDB" id="4U4T">
    <property type="method" value="X-ray"/>
    <property type="resolution" value="2.40 A"/>
    <property type="chains" value="A=1-463"/>
</dbReference>
<dbReference type="PDB" id="4U4V">
    <property type="method" value="X-ray"/>
    <property type="resolution" value="2.35 A"/>
    <property type="chains" value="A=1-463"/>
</dbReference>
<dbReference type="PDB" id="4U4W">
    <property type="method" value="X-ray"/>
    <property type="resolution" value="2.40 A"/>
    <property type="chains" value="A/B=1-463"/>
</dbReference>
<dbReference type="PDBsum" id="4JR9"/>
<dbReference type="PDBsum" id="4JRE"/>
<dbReference type="PDBsum" id="4U4T"/>
<dbReference type="PDBsum" id="4U4V"/>
<dbReference type="PDBsum" id="4U4W"/>
<dbReference type="SMR" id="P10903"/>
<dbReference type="BioGRID" id="4261633">
    <property type="interactions" value="21"/>
</dbReference>
<dbReference type="FunCoup" id="P10903">
    <property type="interactions" value="345"/>
</dbReference>
<dbReference type="STRING" id="511145.b1223"/>
<dbReference type="TCDB" id="2.A.1.8.1">
    <property type="family name" value="the major facilitator superfamily (mfs)"/>
</dbReference>
<dbReference type="jPOST" id="P10903"/>
<dbReference type="PaxDb" id="511145-b1223"/>
<dbReference type="ABCD" id="P10903">
    <property type="antibodies" value="1 sequenced antibody"/>
</dbReference>
<dbReference type="EnsemblBacteria" id="AAC74307">
    <property type="protein sequence ID" value="AAC74307"/>
    <property type="gene ID" value="b1223"/>
</dbReference>
<dbReference type="GeneID" id="93775291"/>
<dbReference type="GeneID" id="945783"/>
<dbReference type="KEGG" id="ecj:JW1214"/>
<dbReference type="KEGG" id="eco:b1223"/>
<dbReference type="KEGG" id="ecoc:C3026_07195"/>
<dbReference type="PATRIC" id="fig|1411691.4.peg.1058"/>
<dbReference type="EchoBASE" id="EB0636"/>
<dbReference type="eggNOG" id="COG2223">
    <property type="taxonomic scope" value="Bacteria"/>
</dbReference>
<dbReference type="HOGENOM" id="CLU_033198_1_0_6"/>
<dbReference type="InParanoid" id="P10903"/>
<dbReference type="OMA" id="WWYYARR"/>
<dbReference type="OrthoDB" id="9771451at2"/>
<dbReference type="PhylomeDB" id="P10903"/>
<dbReference type="BioCyc" id="EcoCyc:NARK-MONOMER"/>
<dbReference type="BioCyc" id="MetaCyc:NARK-MONOMER"/>
<dbReference type="EvolutionaryTrace" id="P10903"/>
<dbReference type="PRO" id="PR:P10903"/>
<dbReference type="Proteomes" id="UP000000625">
    <property type="component" value="Chromosome"/>
</dbReference>
<dbReference type="GO" id="GO:0005886">
    <property type="term" value="C:plasma membrane"/>
    <property type="evidence" value="ECO:0000314"/>
    <property type="project" value="EcoCyc"/>
</dbReference>
<dbReference type="GO" id="GO:0015112">
    <property type="term" value="F:nitrate transmembrane transporter activity"/>
    <property type="evidence" value="ECO:0007669"/>
    <property type="project" value="InterPro"/>
</dbReference>
<dbReference type="GO" id="GO:0015113">
    <property type="term" value="F:nitrite transmembrane transporter activity"/>
    <property type="evidence" value="ECO:0007669"/>
    <property type="project" value="InterPro"/>
</dbReference>
<dbReference type="GO" id="GO:0005452">
    <property type="term" value="F:solute:inorganic anion antiporter activity"/>
    <property type="evidence" value="ECO:0000314"/>
    <property type="project" value="EcoCyc"/>
</dbReference>
<dbReference type="GO" id="GO:0042128">
    <property type="term" value="P:nitrate assimilation"/>
    <property type="evidence" value="ECO:0007669"/>
    <property type="project" value="UniProtKB-KW"/>
</dbReference>
<dbReference type="GO" id="GO:0043602">
    <property type="term" value="P:nitrate catabolic process"/>
    <property type="evidence" value="ECO:0000315"/>
    <property type="project" value="EcoCyc"/>
</dbReference>
<dbReference type="GO" id="GO:0015706">
    <property type="term" value="P:nitrate transmembrane transport"/>
    <property type="evidence" value="ECO:0000315"/>
    <property type="project" value="EcoCyc"/>
</dbReference>
<dbReference type="GO" id="GO:0015707">
    <property type="term" value="P:nitrite transport"/>
    <property type="evidence" value="ECO:0000315"/>
    <property type="project" value="EcoCyc"/>
</dbReference>
<dbReference type="CDD" id="cd17341">
    <property type="entry name" value="MFS_NRT2_like"/>
    <property type="match status" value="1"/>
</dbReference>
<dbReference type="FunFam" id="1.20.1250.20:FF:000024">
    <property type="entry name" value="Nitrite extrusion protein NarK"/>
    <property type="match status" value="1"/>
</dbReference>
<dbReference type="Gene3D" id="1.20.1250.20">
    <property type="entry name" value="MFS general substrate transporter like domains"/>
    <property type="match status" value="1"/>
</dbReference>
<dbReference type="InterPro" id="IPR011701">
    <property type="entry name" value="MFS"/>
</dbReference>
<dbReference type="InterPro" id="IPR036259">
    <property type="entry name" value="MFS_trans_sf"/>
</dbReference>
<dbReference type="InterPro" id="IPR044772">
    <property type="entry name" value="NO3_transporter"/>
</dbReference>
<dbReference type="InterPro" id="IPR004737">
    <property type="entry name" value="NO3_transporter_NarK/NarU-like"/>
</dbReference>
<dbReference type="NCBIfam" id="TIGR00886">
    <property type="entry name" value="2A0108"/>
    <property type="match status" value="1"/>
</dbReference>
<dbReference type="NCBIfam" id="NF011608">
    <property type="entry name" value="PRK15034.1"/>
    <property type="match status" value="1"/>
</dbReference>
<dbReference type="PANTHER" id="PTHR23515">
    <property type="entry name" value="HIGH-AFFINITY NITRATE TRANSPORTER 2.3"/>
    <property type="match status" value="1"/>
</dbReference>
<dbReference type="Pfam" id="PF07690">
    <property type="entry name" value="MFS_1"/>
    <property type="match status" value="1"/>
</dbReference>
<dbReference type="SUPFAM" id="SSF103473">
    <property type="entry name" value="MFS general substrate transporter"/>
    <property type="match status" value="1"/>
</dbReference>
<feature type="chain" id="PRO_0000096728" description="Nitrate/nitrite antiporter NarK">
    <location>
        <begin position="1"/>
        <end position="463"/>
    </location>
</feature>
<feature type="topological domain" description="Cytoplasmic" evidence="6 17 18">
    <location>
        <begin position="1"/>
        <end position="37"/>
    </location>
</feature>
<feature type="transmembrane region" description="Helical" evidence="6 17 18">
    <location>
        <begin position="38"/>
        <end position="59"/>
    </location>
</feature>
<feature type="topological domain" description="Periplasmic" evidence="6 17 18">
    <location>
        <begin position="60"/>
        <end position="73"/>
    </location>
</feature>
<feature type="transmembrane region" description="Helical" evidence="6 17 18">
    <location>
        <begin position="74"/>
        <end position="95"/>
    </location>
</feature>
<feature type="topological domain" description="Cytoplasmic" evidence="6 17 18">
    <location>
        <begin position="96"/>
        <end position="102"/>
    </location>
</feature>
<feature type="transmembrane region" description="Helical" evidence="6 17 18">
    <location>
        <begin position="103"/>
        <end position="122"/>
    </location>
</feature>
<feature type="topological domain" description="Periplasmic" evidence="6 17 18">
    <location>
        <begin position="123"/>
        <end position="130"/>
    </location>
</feature>
<feature type="transmembrane region" description="Helical" evidence="6 17 18">
    <location>
        <begin position="131"/>
        <end position="151"/>
    </location>
</feature>
<feature type="topological domain" description="Cytoplasmic" evidence="6 17 18">
    <location>
        <begin position="152"/>
        <end position="166"/>
    </location>
</feature>
<feature type="transmembrane region" description="Helical" evidence="6 17 18">
    <location>
        <begin position="167"/>
        <end position="189"/>
    </location>
</feature>
<feature type="topological domain" description="Periplasmic" evidence="6 17 18">
    <location>
        <begin position="190"/>
        <end position="211"/>
    </location>
</feature>
<feature type="transmembrane region" description="Helical" evidence="6 17 18">
    <location>
        <begin position="212"/>
        <end position="233"/>
    </location>
</feature>
<feature type="topological domain" description="Cytoplasmic" evidence="6 17 18">
    <location>
        <begin position="234"/>
        <end position="253"/>
    </location>
</feature>
<feature type="transmembrane region" description="Helical" evidence="6 17 18">
    <location>
        <begin position="254"/>
        <end position="281"/>
    </location>
</feature>
<feature type="topological domain" description="Periplasmic" evidence="6 17 18">
    <location>
        <begin position="282"/>
        <end position="289"/>
    </location>
</feature>
<feature type="transmembrane region" description="Helical" evidence="6 17 18">
    <location>
        <begin position="290"/>
        <end position="312"/>
    </location>
</feature>
<feature type="topological domain" description="Cytoplasmic" evidence="6 17 18">
    <location>
        <begin position="313"/>
        <end position="316"/>
    </location>
</feature>
<feature type="transmembrane region" description="Helical" evidence="6 17 18">
    <location>
        <begin position="317"/>
        <end position="338"/>
    </location>
</feature>
<feature type="topological domain" description="Periplasmic" evidence="6 17 18">
    <location>
        <begin position="339"/>
        <end position="347"/>
    </location>
</feature>
<feature type="transmembrane region" description="Helical" evidence="6 17 18">
    <location>
        <begin position="348"/>
        <end position="373"/>
    </location>
</feature>
<feature type="topological domain" description="Cytoplasmic" evidence="6 17 18">
    <location>
        <begin position="374"/>
        <end position="405"/>
    </location>
</feature>
<feature type="transmembrane region" description="Helical" evidence="6 17 18">
    <location>
        <begin position="406"/>
        <end position="427"/>
    </location>
</feature>
<feature type="topological domain" description="Periplasmic" evidence="6 17 18">
    <location>
        <begin position="428"/>
        <end position="435"/>
    </location>
</feature>
<feature type="transmembrane region" description="Helical" evidence="6 17 18">
    <location>
        <begin position="436"/>
        <end position="458"/>
    </location>
</feature>
<feature type="topological domain" description="Cytoplasmic" evidence="3 6 17 18">
    <location>
        <begin position="459"/>
        <end position="463"/>
    </location>
</feature>
<feature type="binding site" evidence="6 17 19">
    <location>
        <position position="89"/>
    </location>
    <ligand>
        <name>nitrate</name>
        <dbReference type="ChEBI" id="CHEBI:17632"/>
    </ligand>
</feature>
<feature type="binding site" evidence="5 16">
    <location>
        <position position="89"/>
    </location>
    <ligand>
        <name>nitrite</name>
        <dbReference type="ChEBI" id="CHEBI:16301"/>
    </ligand>
</feature>
<feature type="binding site" evidence="6 17 19">
    <location>
        <position position="175"/>
    </location>
    <ligand>
        <name>nitrate</name>
        <dbReference type="ChEBI" id="CHEBI:17632"/>
    </ligand>
</feature>
<feature type="binding site" evidence="6 17 19">
    <location>
        <position position="263"/>
    </location>
    <ligand>
        <name>nitrate</name>
        <dbReference type="ChEBI" id="CHEBI:17632"/>
    </ligand>
</feature>
<feature type="binding site" evidence="5 16">
    <location>
        <position position="263"/>
    </location>
    <ligand>
        <name>nitrite</name>
        <dbReference type="ChEBI" id="CHEBI:16301"/>
    </ligand>
</feature>
<feature type="binding site" evidence="6 17">
    <location>
        <position position="411"/>
    </location>
    <ligand>
        <name>nitrate</name>
        <dbReference type="ChEBI" id="CHEBI:17632"/>
    </ligand>
</feature>
<feature type="site" description="Important for activity" evidence="12 13">
    <location>
        <position position="305"/>
    </location>
</feature>
<feature type="mutagenesis site" description="Decreases nitrate uptake activity." evidence="6">
    <original>R</original>
    <variation>K</variation>
    <location>
        <position position="89"/>
    </location>
</feature>
<feature type="mutagenesis site" description="Decreases nitrate uptake activity." evidence="6">
    <original>F</original>
    <variation>A</variation>
    <location>
        <position position="147"/>
    </location>
</feature>
<feature type="mutagenesis site" description="Abolishes nitrate uptake activity." evidence="6">
    <original>Y</original>
    <variation>F</variation>
    <location>
        <position position="263"/>
    </location>
</feature>
<feature type="mutagenesis site" description="Decreases nitrate uptake activity." evidence="6">
    <original>F</original>
    <variation>A</variation>
    <location>
        <position position="267"/>
    </location>
</feature>
<feature type="mutagenesis site" description="Abolishes nitrate uptake activity." evidence="6">
    <original>G</original>
    <variation>A</variation>
    <location>
        <position position="268"/>
    </location>
</feature>
<feature type="mutagenesis site" description="Abolishes nitrate uptake activity." evidence="6">
    <original>R</original>
    <variation>K</variation>
    <location>
        <position position="305"/>
    </location>
</feature>
<feature type="mutagenesis site" description="Abolishes nitrate uptake activity; when associated with A-365 and A-367." evidence="6">
    <original>G</original>
    <variation>A</variation>
    <location>
        <position position="363"/>
    </location>
</feature>
<feature type="mutagenesis site" description="Abolishes nitrate uptake activity; when associated with A-363 and A-367." evidence="6">
    <original>G</original>
    <variation>A</variation>
    <location>
        <position position="365"/>
    </location>
</feature>
<feature type="mutagenesis site" description="Abolishes nitrate uptake activity; when associated with A-363 and A-365." evidence="6">
    <original>G</original>
    <variation>A</variation>
    <location>
        <position position="367"/>
    </location>
</feature>
<feature type="mutagenesis site" description="Abolishes nitrate uptake activity." evidence="6">
    <original>G</original>
    <variation>A</variation>
    <location>
        <position position="408"/>
    </location>
</feature>
<feature type="mutagenesis site" description="Abolishes nitrate uptake activity." evidence="6">
    <original>G</original>
    <variation>A</variation>
    <location>
        <position position="418"/>
    </location>
</feature>
<feature type="strand" evidence="23">
    <location>
        <begin position="13"/>
        <end position="16"/>
    </location>
</feature>
<feature type="helix" evidence="22">
    <location>
        <begin position="23"/>
        <end position="28"/>
    </location>
</feature>
<feature type="helix" evidence="22">
    <location>
        <begin position="30"/>
        <end position="52"/>
    </location>
</feature>
<feature type="helix" evidence="22">
    <location>
        <begin position="55"/>
        <end position="61"/>
    </location>
</feature>
<feature type="turn" evidence="22">
    <location>
        <begin position="63"/>
        <end position="66"/>
    </location>
</feature>
<feature type="helix" evidence="22">
    <location>
        <begin position="71"/>
        <end position="79"/>
    </location>
</feature>
<feature type="helix" evidence="22">
    <location>
        <begin position="81"/>
        <end position="99"/>
    </location>
</feature>
<feature type="helix" evidence="22">
    <location>
        <begin position="101"/>
        <end position="110"/>
    </location>
</feature>
<feature type="helix" evidence="22">
    <location>
        <begin position="113"/>
        <end position="122"/>
    </location>
</feature>
<feature type="strand" evidence="20">
    <location>
        <begin position="125"/>
        <end position="127"/>
    </location>
</feature>
<feature type="helix" evidence="22">
    <location>
        <begin position="130"/>
        <end position="140"/>
    </location>
</feature>
<feature type="helix" evidence="22">
    <location>
        <begin position="141"/>
        <end position="145"/>
    </location>
</feature>
<feature type="helix" evidence="22">
    <location>
        <begin position="146"/>
        <end position="156"/>
    </location>
</feature>
<feature type="helix" evidence="22">
    <location>
        <begin position="160"/>
        <end position="175"/>
    </location>
</feature>
<feature type="helix" evidence="22">
    <location>
        <begin position="177"/>
        <end position="188"/>
    </location>
</feature>
<feature type="helix" evidence="22">
    <location>
        <begin position="195"/>
        <end position="197"/>
    </location>
</feature>
<feature type="helix" evidence="22">
    <location>
        <begin position="214"/>
        <end position="217"/>
    </location>
</feature>
<feature type="helix" evidence="22">
    <location>
        <begin position="219"/>
        <end position="233"/>
    </location>
</feature>
<feature type="helix" evidence="22">
    <location>
        <begin position="249"/>
        <end position="252"/>
    </location>
</feature>
<feature type="helix" evidence="22">
    <location>
        <begin position="254"/>
        <end position="284"/>
    </location>
</feature>
<feature type="helix" evidence="22">
    <location>
        <begin position="290"/>
        <end position="292"/>
    </location>
</feature>
<feature type="turn" evidence="22">
    <location>
        <begin position="293"/>
        <end position="295"/>
    </location>
</feature>
<feature type="helix" evidence="22">
    <location>
        <begin position="296"/>
        <end position="315"/>
    </location>
</feature>
<feature type="helix" evidence="22">
    <location>
        <begin position="317"/>
        <end position="334"/>
    </location>
</feature>
<feature type="helix" evidence="22">
    <location>
        <begin position="335"/>
        <end position="338"/>
    </location>
</feature>
<feature type="strand" evidence="21">
    <location>
        <begin position="342"/>
        <end position="344"/>
    </location>
</feature>
<feature type="helix" evidence="22">
    <location>
        <begin position="348"/>
        <end position="387"/>
    </location>
</feature>
<feature type="helix" evidence="22">
    <location>
        <begin position="392"/>
        <end position="414"/>
    </location>
</feature>
<feature type="helix" evidence="22">
    <location>
        <begin position="417"/>
        <end position="432"/>
    </location>
</feature>
<feature type="strand" evidence="21">
    <location>
        <begin position="433"/>
        <end position="435"/>
    </location>
</feature>
<feature type="helix" evidence="22">
    <location>
        <begin position="436"/>
        <end position="459"/>
    </location>
</feature>
<feature type="helix" evidence="21">
    <location>
        <begin position="461"/>
        <end position="463"/>
    </location>
</feature>
<reference key="1">
    <citation type="journal article" date="1989" name="FEBS Lett.">
        <title>The narK gene product participates in nitrate transport induced in Escherichia coli nitrate-respiring cells.</title>
        <authorList>
            <person name="Noji S."/>
            <person name="Nohno T."/>
            <person name="Saito T."/>
            <person name="Taniguchi S."/>
        </authorList>
    </citation>
    <scope>NUCLEOTIDE SEQUENCE [GENOMIC DNA]</scope>
    <scope>FUNCTION</scope>
    <scope>INDUCTION</scope>
    <scope>DISRUPTION PHENOTYPE</scope>
    <source>
        <strain>K12</strain>
    </source>
</reference>
<reference key="2">
    <citation type="journal article" date="1996" name="DNA Res.">
        <title>A 718-kb DNA sequence of the Escherichia coli K-12 genome corresponding to the 12.7-28.0 min region on the linkage map.</title>
        <authorList>
            <person name="Oshima T."/>
            <person name="Aiba H."/>
            <person name="Baba T."/>
            <person name="Fujita K."/>
            <person name="Hayashi K."/>
            <person name="Honjo A."/>
            <person name="Ikemoto K."/>
            <person name="Inada T."/>
            <person name="Itoh T."/>
            <person name="Kajihara M."/>
            <person name="Kanai K."/>
            <person name="Kashimoto K."/>
            <person name="Kimura S."/>
            <person name="Kitagawa M."/>
            <person name="Makino K."/>
            <person name="Masuda S."/>
            <person name="Miki T."/>
            <person name="Mizobuchi K."/>
            <person name="Mori H."/>
            <person name="Motomura K."/>
            <person name="Nakamura Y."/>
            <person name="Nashimoto H."/>
            <person name="Nishio Y."/>
            <person name="Saito N."/>
            <person name="Sampei G."/>
            <person name="Seki Y."/>
            <person name="Tagami H."/>
            <person name="Takemoto K."/>
            <person name="Wada C."/>
            <person name="Yamamoto Y."/>
            <person name="Yano M."/>
            <person name="Horiuchi T."/>
        </authorList>
    </citation>
    <scope>NUCLEOTIDE SEQUENCE [LARGE SCALE GENOMIC DNA]</scope>
    <source>
        <strain>K12 / W3110 / ATCC 27325 / DSM 5911</strain>
    </source>
</reference>
<reference key="3">
    <citation type="journal article" date="1997" name="Science">
        <title>The complete genome sequence of Escherichia coli K-12.</title>
        <authorList>
            <person name="Blattner F.R."/>
            <person name="Plunkett G. III"/>
            <person name="Bloch C.A."/>
            <person name="Perna N.T."/>
            <person name="Burland V."/>
            <person name="Riley M."/>
            <person name="Collado-Vides J."/>
            <person name="Glasner J.D."/>
            <person name="Rode C.K."/>
            <person name="Mayhew G.F."/>
            <person name="Gregor J."/>
            <person name="Davis N.W."/>
            <person name="Kirkpatrick H.A."/>
            <person name="Goeden M.A."/>
            <person name="Rose D.J."/>
            <person name="Mau B."/>
            <person name="Shao Y."/>
        </authorList>
    </citation>
    <scope>NUCLEOTIDE SEQUENCE [LARGE SCALE GENOMIC DNA]</scope>
    <source>
        <strain>K12 / MG1655 / ATCC 47076</strain>
    </source>
</reference>
<reference key="4">
    <citation type="journal article" date="2006" name="Mol. Syst. Biol.">
        <title>Highly accurate genome sequences of Escherichia coli K-12 strains MG1655 and W3110.</title>
        <authorList>
            <person name="Hayashi K."/>
            <person name="Morooka N."/>
            <person name="Yamamoto Y."/>
            <person name="Fujita K."/>
            <person name="Isono K."/>
            <person name="Choi S."/>
            <person name="Ohtsubo E."/>
            <person name="Baba T."/>
            <person name="Wanner B.L."/>
            <person name="Mori H."/>
            <person name="Horiuchi T."/>
        </authorList>
    </citation>
    <scope>NUCLEOTIDE SEQUENCE [LARGE SCALE GENOMIC DNA]</scope>
    <source>
        <strain>K12 / W3110 / ATCC 27325 / DSM 5911</strain>
    </source>
</reference>
<reference key="5">
    <citation type="journal article" date="1989" name="Nucleic Acids Res.">
        <title>The narX and narL genes encoding the nitrate-sensing regulators of Escherichia coli are homologous to a family of prokaryotic two-component regulatory genes.</title>
        <authorList>
            <person name="Nohno T."/>
            <person name="Noji S."/>
            <person name="Taniguchi S."/>
            <person name="Saito T."/>
        </authorList>
    </citation>
    <scope>NUCLEOTIDE SEQUENCE [GENOMIC DNA] OF 1-31</scope>
    <source>
        <strain>K12</strain>
    </source>
</reference>
<reference key="6">
    <citation type="journal article" date="2002" name="Mol. Microbiol.">
        <title>The roles of the polytopic membrane proteins NarK, NarU and NirC in Escherichia coli K-12: two nitrate and three nitrite transporters.</title>
        <authorList>
            <person name="Clegg S."/>
            <person name="Yu F."/>
            <person name="Griffiths L."/>
            <person name="Cole J.A."/>
        </authorList>
    </citation>
    <scope>FUNCTION</scope>
    <scope>DISRUPTION PHENOTYPE</scope>
    <source>
        <strain>K12</strain>
    </source>
</reference>
<reference key="7">
    <citation type="journal article" date="2005" name="Biochem. Soc. Trans.">
        <title>Nitrate and nitrite transport in Escherichia coli.</title>
        <authorList>
            <person name="Jia W."/>
            <person name="Cole J.A."/>
        </authorList>
    </citation>
    <scope>FUNCTION</scope>
    <scope>CATALYTIC ACTIVITY</scope>
</reference>
<reference key="8">
    <citation type="journal article" date="2005" name="Science">
        <title>Global topology analysis of the Escherichia coli inner membrane proteome.</title>
        <authorList>
            <person name="Daley D.O."/>
            <person name="Rapp M."/>
            <person name="Granseth E."/>
            <person name="Melen K."/>
            <person name="Drew D."/>
            <person name="von Heijne G."/>
        </authorList>
    </citation>
    <scope>TOPOLOGY [LARGE SCALE ANALYSIS]</scope>
    <scope>SUBCELLULAR LOCATION</scope>
    <source>
        <strain>K12 / MG1655 / ATCC 47076</strain>
    </source>
</reference>
<reference key="9">
    <citation type="journal article" date="2006" name="Microbiology">
        <title>Role of the Escherichia coli nitrate transport protein, NarU, in survival during severe nutrient starvation and slow growth.</title>
        <authorList>
            <person name="Clegg S.J."/>
            <person name="Jia W."/>
            <person name="Cole J.A."/>
        </authorList>
    </citation>
    <scope>FUNCTION</scope>
    <scope>INDUCTION</scope>
    <source>
        <strain>K12</strain>
    </source>
</reference>
<reference key="10">
    <citation type="journal article" date="2009" name="Biochem. J.">
        <title>A single channel for nitrate uptake, nitrite export and nitrite uptake by Escherichia coli NarU and a role for NirC in nitrite export and uptake.</title>
        <authorList>
            <person name="Jia W."/>
            <person name="Tovell N."/>
            <person name="Clegg S."/>
            <person name="Trimmer M."/>
            <person name="Cole J."/>
        </authorList>
    </citation>
    <scope>TOPOLOGY</scope>
</reference>
<reference evidence="15 16" key="11">
    <citation type="journal article" date="2013" name="Nature">
        <title>Crystal structure of a nitrate/nitrite exchanger.</title>
        <authorList>
            <person name="Zheng H."/>
            <person name="Wisedchaisri G."/>
            <person name="Gonen T."/>
        </authorList>
    </citation>
    <scope>X-RAY CRYSTALLOGRAPHY (2.60 ANGSTROMS) IN COMPLEX WITH NITRITE</scope>
    <scope>FUNCTION AS AN EXCHANGER</scope>
    <scope>CATALYTIC ACTIVITY</scope>
    <scope>SUBCELLULAR LOCATION</scope>
    <scope>TOPOLOGY</scope>
    <scope>DOMAIN</scope>
    <scope>SUBSTRATE-BINDING SITES</scope>
    <source>
        <strain>K12</strain>
    </source>
</reference>
<reference evidence="17 18 19" key="12">
    <citation type="journal article" date="2015" name="Nat. Commun.">
        <title>Structural basis for dynamic mechanism of nitrate/nitrite antiport by NarK.</title>
        <authorList>
            <person name="Fukuda M."/>
            <person name="Takeda H."/>
            <person name="Kato H.E."/>
            <person name="Doki S."/>
            <person name="Ito K."/>
            <person name="Maturana A.D."/>
            <person name="Ishitani R."/>
            <person name="Nureki O."/>
        </authorList>
    </citation>
    <scope>X-RAY CRYSTALLOGRAPHY (2.35 ANGSTROMS) IN COMPLEXES WITH NITRATE IN THREE DIFFERENT STATES</scope>
    <scope>FUNCTION</scope>
    <scope>CATALYTIC ACTIVITY</scope>
    <scope>SUBCELLULAR LOCATION</scope>
    <scope>TOPOLOGY</scope>
    <scope>DOMAIN</scope>
    <scope>MUTAGENESIS OF ARG-89; PHE-147; TYR-263; PHE-267; GLY-268; ARG-305; GLY-363; GLY-365; GLY-367; GLY-408 AND GLY-418</scope>
</reference>
<evidence type="ECO:0000269" key="1">
    <source>
    </source>
</evidence>
<evidence type="ECO:0000269" key="2">
    <source>
    </source>
</evidence>
<evidence type="ECO:0000269" key="3">
    <source>
    </source>
</evidence>
<evidence type="ECO:0000269" key="4">
    <source>
    </source>
</evidence>
<evidence type="ECO:0000269" key="5">
    <source>
    </source>
</evidence>
<evidence type="ECO:0000269" key="6">
    <source>
    </source>
</evidence>
<evidence type="ECO:0000269" key="7">
    <source>
    </source>
</evidence>
<evidence type="ECO:0000303" key="8">
    <source>
    </source>
</evidence>
<evidence type="ECO:0000303" key="9">
    <source>
    </source>
</evidence>
<evidence type="ECO:0000303" key="10">
    <source>
    </source>
</evidence>
<evidence type="ECO:0000305" key="11"/>
<evidence type="ECO:0000305" key="12">
    <source>
    </source>
</evidence>
<evidence type="ECO:0000305" key="13">
    <source>
    </source>
</evidence>
<evidence type="ECO:0000305" key="14">
    <source>
    </source>
</evidence>
<evidence type="ECO:0007744" key="15">
    <source>
        <dbReference type="PDB" id="4JR9"/>
    </source>
</evidence>
<evidence type="ECO:0007744" key="16">
    <source>
        <dbReference type="PDB" id="4JRE"/>
    </source>
</evidence>
<evidence type="ECO:0007744" key="17">
    <source>
        <dbReference type="PDB" id="4U4T"/>
    </source>
</evidence>
<evidence type="ECO:0007744" key="18">
    <source>
        <dbReference type="PDB" id="4U4V"/>
    </source>
</evidence>
<evidence type="ECO:0007744" key="19">
    <source>
        <dbReference type="PDB" id="4U4W"/>
    </source>
</evidence>
<evidence type="ECO:0007829" key="20">
    <source>
        <dbReference type="PDB" id="4JRE"/>
    </source>
</evidence>
<evidence type="ECO:0007829" key="21">
    <source>
        <dbReference type="PDB" id="4U4T"/>
    </source>
</evidence>
<evidence type="ECO:0007829" key="22">
    <source>
        <dbReference type="PDB" id="4U4V"/>
    </source>
</evidence>
<evidence type="ECO:0007829" key="23">
    <source>
        <dbReference type="PDB" id="4U4W"/>
    </source>
</evidence>